<dbReference type="EC" id="6.3.5.2" evidence="1"/>
<dbReference type="EMBL" id="CP000159">
    <property type="protein sequence ID" value="ABC43892.1"/>
    <property type="molecule type" value="Genomic_DNA"/>
</dbReference>
<dbReference type="RefSeq" id="WP_011404803.1">
    <property type="nucleotide sequence ID" value="NC_007677.1"/>
</dbReference>
<dbReference type="RefSeq" id="YP_446181.1">
    <property type="nucleotide sequence ID" value="NC_007677.1"/>
</dbReference>
<dbReference type="SMR" id="Q2S0V0"/>
<dbReference type="STRING" id="309807.SRU_2075"/>
<dbReference type="MEROPS" id="C26.962"/>
<dbReference type="EnsemblBacteria" id="ABC43892">
    <property type="protein sequence ID" value="ABC43892"/>
    <property type="gene ID" value="SRU_2075"/>
</dbReference>
<dbReference type="GeneID" id="83729018"/>
<dbReference type="KEGG" id="sru:SRU_2075"/>
<dbReference type="PATRIC" id="fig|309807.25.peg.2159"/>
<dbReference type="eggNOG" id="COG0518">
    <property type="taxonomic scope" value="Bacteria"/>
</dbReference>
<dbReference type="eggNOG" id="COG0519">
    <property type="taxonomic scope" value="Bacteria"/>
</dbReference>
<dbReference type="HOGENOM" id="CLU_014340_0_5_10"/>
<dbReference type="OrthoDB" id="9802219at2"/>
<dbReference type="UniPathway" id="UPA00189">
    <property type="reaction ID" value="UER00296"/>
</dbReference>
<dbReference type="Proteomes" id="UP000008674">
    <property type="component" value="Chromosome"/>
</dbReference>
<dbReference type="GO" id="GO:0005829">
    <property type="term" value="C:cytosol"/>
    <property type="evidence" value="ECO:0007669"/>
    <property type="project" value="TreeGrafter"/>
</dbReference>
<dbReference type="GO" id="GO:0005524">
    <property type="term" value="F:ATP binding"/>
    <property type="evidence" value="ECO:0007669"/>
    <property type="project" value="UniProtKB-UniRule"/>
</dbReference>
<dbReference type="GO" id="GO:0003921">
    <property type="term" value="F:GMP synthase activity"/>
    <property type="evidence" value="ECO:0007669"/>
    <property type="project" value="InterPro"/>
</dbReference>
<dbReference type="CDD" id="cd01742">
    <property type="entry name" value="GATase1_GMP_Synthase"/>
    <property type="match status" value="1"/>
</dbReference>
<dbReference type="CDD" id="cd01997">
    <property type="entry name" value="GMP_synthase_C"/>
    <property type="match status" value="1"/>
</dbReference>
<dbReference type="FunFam" id="3.30.300.10:FF:000002">
    <property type="entry name" value="GMP synthase [glutamine-hydrolyzing]"/>
    <property type="match status" value="1"/>
</dbReference>
<dbReference type="FunFam" id="3.40.50.620:FF:000001">
    <property type="entry name" value="GMP synthase [glutamine-hydrolyzing]"/>
    <property type="match status" value="1"/>
</dbReference>
<dbReference type="FunFam" id="3.40.50.880:FF:000001">
    <property type="entry name" value="GMP synthase [glutamine-hydrolyzing]"/>
    <property type="match status" value="1"/>
</dbReference>
<dbReference type="Gene3D" id="3.30.300.10">
    <property type="match status" value="1"/>
</dbReference>
<dbReference type="Gene3D" id="3.40.50.880">
    <property type="match status" value="1"/>
</dbReference>
<dbReference type="Gene3D" id="3.40.50.620">
    <property type="entry name" value="HUPs"/>
    <property type="match status" value="1"/>
</dbReference>
<dbReference type="HAMAP" id="MF_00344">
    <property type="entry name" value="GMP_synthase"/>
    <property type="match status" value="1"/>
</dbReference>
<dbReference type="InterPro" id="IPR029062">
    <property type="entry name" value="Class_I_gatase-like"/>
</dbReference>
<dbReference type="InterPro" id="IPR017926">
    <property type="entry name" value="GATASE"/>
</dbReference>
<dbReference type="InterPro" id="IPR001674">
    <property type="entry name" value="GMP_synth_C"/>
</dbReference>
<dbReference type="InterPro" id="IPR004739">
    <property type="entry name" value="GMP_synth_GATase"/>
</dbReference>
<dbReference type="InterPro" id="IPR022955">
    <property type="entry name" value="GMP_synthase"/>
</dbReference>
<dbReference type="InterPro" id="IPR025777">
    <property type="entry name" value="GMPS_ATP_PPase_dom"/>
</dbReference>
<dbReference type="InterPro" id="IPR022310">
    <property type="entry name" value="NAD/GMP_synthase"/>
</dbReference>
<dbReference type="InterPro" id="IPR014729">
    <property type="entry name" value="Rossmann-like_a/b/a_fold"/>
</dbReference>
<dbReference type="NCBIfam" id="TIGR00884">
    <property type="entry name" value="guaA_Cterm"/>
    <property type="match status" value="1"/>
</dbReference>
<dbReference type="NCBIfam" id="TIGR00888">
    <property type="entry name" value="guaA_Nterm"/>
    <property type="match status" value="1"/>
</dbReference>
<dbReference type="NCBIfam" id="NF000848">
    <property type="entry name" value="PRK00074.1"/>
    <property type="match status" value="1"/>
</dbReference>
<dbReference type="PANTHER" id="PTHR11922:SF2">
    <property type="entry name" value="GMP SYNTHASE [GLUTAMINE-HYDROLYZING]"/>
    <property type="match status" value="1"/>
</dbReference>
<dbReference type="PANTHER" id="PTHR11922">
    <property type="entry name" value="GMP SYNTHASE-RELATED"/>
    <property type="match status" value="1"/>
</dbReference>
<dbReference type="Pfam" id="PF00117">
    <property type="entry name" value="GATase"/>
    <property type="match status" value="1"/>
</dbReference>
<dbReference type="Pfam" id="PF00958">
    <property type="entry name" value="GMP_synt_C"/>
    <property type="match status" value="1"/>
</dbReference>
<dbReference type="Pfam" id="PF02540">
    <property type="entry name" value="NAD_synthase"/>
    <property type="match status" value="1"/>
</dbReference>
<dbReference type="PRINTS" id="PR00096">
    <property type="entry name" value="GATASE"/>
</dbReference>
<dbReference type="SUPFAM" id="SSF52402">
    <property type="entry name" value="Adenine nucleotide alpha hydrolases-like"/>
    <property type="match status" value="1"/>
</dbReference>
<dbReference type="SUPFAM" id="SSF52317">
    <property type="entry name" value="Class I glutamine amidotransferase-like"/>
    <property type="match status" value="1"/>
</dbReference>
<dbReference type="SUPFAM" id="SSF54810">
    <property type="entry name" value="GMP synthetase C-terminal dimerisation domain"/>
    <property type="match status" value="1"/>
</dbReference>
<dbReference type="PROSITE" id="PS51273">
    <property type="entry name" value="GATASE_TYPE_1"/>
    <property type="match status" value="1"/>
</dbReference>
<dbReference type="PROSITE" id="PS51553">
    <property type="entry name" value="GMPS_ATP_PPASE"/>
    <property type="match status" value="1"/>
</dbReference>
<reference key="1">
    <citation type="journal article" date="2005" name="Proc. Natl. Acad. Sci. U.S.A.">
        <title>The genome of Salinibacter ruber: convergence and gene exchange among hyperhalophilic bacteria and archaea.</title>
        <authorList>
            <person name="Mongodin E.F."/>
            <person name="Nelson K.E."/>
            <person name="Daugherty S."/>
            <person name="DeBoy R.T."/>
            <person name="Wister J."/>
            <person name="Khouri H."/>
            <person name="Weidman J."/>
            <person name="Walsh D.A."/>
            <person name="Papke R.T."/>
            <person name="Sanchez Perez G."/>
            <person name="Sharma A.K."/>
            <person name="Nesbo C.L."/>
            <person name="MacLeod D."/>
            <person name="Bapteste E."/>
            <person name="Doolittle W.F."/>
            <person name="Charlebois R.L."/>
            <person name="Legault B."/>
            <person name="Rodriguez-Valera F."/>
        </authorList>
    </citation>
    <scope>NUCLEOTIDE SEQUENCE [LARGE SCALE GENOMIC DNA]</scope>
    <source>
        <strain>DSM 13855 / CECT 5946 / M31</strain>
    </source>
</reference>
<keyword id="KW-0067">ATP-binding</keyword>
<keyword id="KW-0315">Glutamine amidotransferase</keyword>
<keyword id="KW-0332">GMP biosynthesis</keyword>
<keyword id="KW-0436">Ligase</keyword>
<keyword id="KW-0547">Nucleotide-binding</keyword>
<keyword id="KW-0658">Purine biosynthesis</keyword>
<keyword id="KW-1185">Reference proteome</keyword>
<protein>
    <recommendedName>
        <fullName evidence="1">GMP synthase [glutamine-hydrolyzing]</fullName>
        <ecNumber evidence="1">6.3.5.2</ecNumber>
    </recommendedName>
    <alternativeName>
        <fullName evidence="1">GMP synthetase</fullName>
    </alternativeName>
    <alternativeName>
        <fullName evidence="1">Glutamine amidotransferase</fullName>
    </alternativeName>
</protein>
<feature type="chain" id="PRO_1000133379" description="GMP synthase [glutamine-hydrolyzing]">
    <location>
        <begin position="1"/>
        <end position="526"/>
    </location>
</feature>
<feature type="domain" description="Glutamine amidotransferase type-1" evidence="1">
    <location>
        <begin position="4"/>
        <end position="204"/>
    </location>
</feature>
<feature type="domain" description="GMPS ATP-PPase" evidence="1">
    <location>
        <begin position="205"/>
        <end position="401"/>
    </location>
</feature>
<feature type="active site" description="Nucleophile" evidence="1">
    <location>
        <position position="87"/>
    </location>
</feature>
<feature type="active site" evidence="1">
    <location>
        <position position="178"/>
    </location>
</feature>
<feature type="active site" evidence="1">
    <location>
        <position position="180"/>
    </location>
</feature>
<feature type="binding site" evidence="1">
    <location>
        <begin position="232"/>
        <end position="238"/>
    </location>
    <ligand>
        <name>ATP</name>
        <dbReference type="ChEBI" id="CHEBI:30616"/>
    </ligand>
</feature>
<proteinExistence type="inferred from homology"/>
<evidence type="ECO:0000255" key="1">
    <source>
        <dbReference type="HAMAP-Rule" id="MF_00344"/>
    </source>
</evidence>
<gene>
    <name evidence="1" type="primary">guaA</name>
    <name type="ordered locus">SRU_2075</name>
</gene>
<sequence length="526" mass="58103">MHDKIVVLDFGSQYTQLIARRVRETGVYSEIRPCTVEADAIDALNPSGVILSGGPCSVYDEAGPALDPALLELERPDGTPVPLLGICYGLQAMAHQFGGEVARADRREFGRAQLQVPPDGQEKSLLFEGVPSGSTVWMSHSDHLTDLPDGYEVIARTDNAPVAAVRDTDGPYYGVQFHPEVVHTDYGRQILENFAHAICGCSGDWTPASFVEEQTETIRDRVGDRHVILGLSGGVDSSVAAALLQRALGDQLHCIFVNNGLLRKGEWNQVQDTFRGHFEMDLRTTDATDRFLERLDGVTDPEEKRTIVGNTFIEVFEEQTEAIAADLGHRPTYLAQGTLYPDLIESVSFKGPSVTIKTHHNVGGLPEELDFDLIEPFRELFKDEVREIGRLLDVPDPIVGRHPFPGPGLAIRILGQITRERLALLREADAIFIEELRANDLYDEVWQAFAVLLPVQAVGVMGDERTYENVCALRAVTSVDGMTADWAHLPHDFLGHVSNRIVNEVPGINRIVYDVSSKPPATIEWE</sequence>
<accession>Q2S0V0</accession>
<name>GUAA_SALRD</name>
<organism>
    <name type="scientific">Salinibacter ruber (strain DSM 13855 / M31)</name>
    <dbReference type="NCBI Taxonomy" id="309807"/>
    <lineage>
        <taxon>Bacteria</taxon>
        <taxon>Pseudomonadati</taxon>
        <taxon>Rhodothermota</taxon>
        <taxon>Rhodothermia</taxon>
        <taxon>Rhodothermales</taxon>
        <taxon>Salinibacteraceae</taxon>
        <taxon>Salinibacter</taxon>
    </lineage>
</organism>
<comment type="function">
    <text evidence="1">Catalyzes the synthesis of GMP from XMP.</text>
</comment>
<comment type="catalytic activity">
    <reaction evidence="1">
        <text>XMP + L-glutamine + ATP + H2O = GMP + L-glutamate + AMP + diphosphate + 2 H(+)</text>
        <dbReference type="Rhea" id="RHEA:11680"/>
        <dbReference type="ChEBI" id="CHEBI:15377"/>
        <dbReference type="ChEBI" id="CHEBI:15378"/>
        <dbReference type="ChEBI" id="CHEBI:29985"/>
        <dbReference type="ChEBI" id="CHEBI:30616"/>
        <dbReference type="ChEBI" id="CHEBI:33019"/>
        <dbReference type="ChEBI" id="CHEBI:57464"/>
        <dbReference type="ChEBI" id="CHEBI:58115"/>
        <dbReference type="ChEBI" id="CHEBI:58359"/>
        <dbReference type="ChEBI" id="CHEBI:456215"/>
        <dbReference type="EC" id="6.3.5.2"/>
    </reaction>
</comment>
<comment type="pathway">
    <text evidence="1">Purine metabolism; GMP biosynthesis; GMP from XMP (L-Gln route): step 1/1.</text>
</comment>
<comment type="subunit">
    <text evidence="1">Homodimer.</text>
</comment>